<gene>
    <name type="primary">BACE2</name>
    <name type="synonym">AEPLC</name>
    <name type="synonym">ALP56</name>
    <name type="synonym">ASP21</name>
    <name type="ORF">CDA13</name>
    <name type="ORF">UNQ418/PRO852</name>
</gene>
<protein>
    <recommendedName>
        <fullName>Beta-secretase 2</fullName>
        <ecNumber evidence="16">3.4.23.45</ecNumber>
    </recommendedName>
    <alternativeName>
        <fullName>Aspartic-like protease 56 kDa</fullName>
    </alternativeName>
    <alternativeName>
        <fullName>Aspartyl protease 1</fullName>
        <shortName>ASP1</shortName>
        <shortName>Asp 1</shortName>
    </alternativeName>
    <alternativeName>
        <fullName>Beta-site amyloid precursor protein cleaving enzyme 2</fullName>
        <shortName>Beta-site APP cleaving enzyme 2</shortName>
    </alternativeName>
    <alternativeName>
        <fullName>Down region aspartic protease</fullName>
        <shortName>DRAP</shortName>
    </alternativeName>
    <alternativeName>
        <fullName>Memapsin-1</fullName>
    </alternativeName>
    <alternativeName>
        <fullName>Membrane-associated aspartic protease 1</fullName>
    </alternativeName>
    <alternativeName>
        <fullName>Theta-secretase</fullName>
    </alternativeName>
</protein>
<comment type="function">
    <text evidence="3 9 11 12 14 16 17">Responsible for the proteolytic processing of the amyloid precursor protein (APP). Cleaves APP, between residues 690 and 691, leading to the generation and extracellular release of beta-cleaved soluble APP, and a corresponding cell-associated C-terminal fragment which is later released by gamma-secretase. It has also been shown that it can cleave APP between residues 671 and 672 (PubMed:10591213, PubMed:11083922, PubMed:11423558, PubMed:15857888, PubMed:16816112). Involved in the proteolytic shedding of PMEL at early stages of melanosome biogenesis. Cleaves PMEL within the M-beta fragment to release the amyloidogenic PMEL luminal fragment containing M-alpha and a small portion of M-beta N-terminus. This is a prerequisite step for subsequent processing and assembly of PMEL fibrils into amyloid sheets (PubMed:23754390). Responsible also for the proteolytic processing of CLTRN in pancreatic beta cells (PubMed:21907142).</text>
</comment>
<comment type="catalytic activity">
    <reaction evidence="9 16">
        <text>Broad endopeptidase specificity. Cleaves Glu-Val-Asn-Leu-|-Asp-Ala-Glu-Phe in the Swedish variant of Alzheimer's amyloid precursor protein.</text>
        <dbReference type="EC" id="3.4.23.45"/>
    </reaction>
</comment>
<comment type="subunit">
    <text evidence="13 15">Monomer. Interacts with RTN3 and RTN4.</text>
</comment>
<comment type="interaction">
    <interactant intactId="EBI-11282723">
        <id>Q9Y5Z0</id>
    </interactant>
    <interactant intactId="EBI-77613">
        <id>P05067</id>
        <label>APP</label>
    </interactant>
    <organismsDiffer>false</organismsDiffer>
    <experiments>3</experiments>
</comment>
<comment type="interaction">
    <interactant intactId="EBI-11282723">
        <id>Q9Y5Z0</id>
    </interactant>
    <interactant intactId="EBI-2875816">
        <id>Q9NP61</id>
        <label>ARFGAP3</label>
    </interactant>
    <organismsDiffer>false</organismsDiffer>
    <experiments>3</experiments>
</comment>
<comment type="interaction">
    <interactant intactId="EBI-11282723">
        <id>Q9Y5Z0</id>
    </interactant>
    <interactant intactId="EBI-25917771">
        <id>Q13510-3</id>
        <label>ASAH1</label>
    </interactant>
    <organismsDiffer>false</organismsDiffer>
    <experiments>3</experiments>
</comment>
<comment type="interaction">
    <interactant intactId="EBI-11282723">
        <id>Q9Y5Z0</id>
    </interactant>
    <interactant intactId="EBI-10260328">
        <id>Q86XM0</id>
        <label>CATSPERD</label>
    </interactant>
    <organismsDiffer>false</organismsDiffer>
    <experiments>3</experiments>
</comment>
<comment type="interaction">
    <interactant intactId="EBI-11282723">
        <id>Q9Y5Z0</id>
    </interactant>
    <interactant intactId="EBI-3443946">
        <id>Q9Y6W6</id>
        <label>DUSP10</label>
    </interactant>
    <organismsDiffer>false</organismsDiffer>
    <experiments>3</experiments>
</comment>
<comment type="interaction">
    <interactant intactId="EBI-11282723">
        <id>Q9Y5Z0</id>
    </interactant>
    <interactant intactId="EBI-8526679">
        <id>P10997</id>
        <label>IAPP</label>
    </interactant>
    <organismsDiffer>false</organismsDiffer>
    <experiments>3</experiments>
</comment>
<comment type="interaction">
    <interactant intactId="EBI-11282723">
        <id>Q9Y5Z0</id>
    </interactant>
    <interactant intactId="EBI-8472267">
        <id>P57682</id>
        <label>KLF3</label>
    </interactant>
    <organismsDiffer>false</organismsDiffer>
    <experiments>3</experiments>
</comment>
<comment type="interaction">
    <interactant intactId="EBI-11282723">
        <id>Q9Y5Z0</id>
    </interactant>
    <interactant intactId="EBI-742756">
        <id>P08727</id>
        <label>KRT19</label>
    </interactant>
    <organismsDiffer>false</organismsDiffer>
    <experiments>3</experiments>
</comment>
<comment type="interaction">
    <interactant intactId="EBI-11282723">
        <id>Q9Y5Z0</id>
    </interactant>
    <interactant intactId="EBI-1052558">
        <id>Q92615</id>
        <label>LARP4B</label>
    </interactant>
    <organismsDiffer>false</organismsDiffer>
    <experiments>3</experiments>
</comment>
<comment type="interaction">
    <interactant intactId="EBI-11282723">
        <id>Q9Y5Z0</id>
    </interactant>
    <interactant intactId="EBI-9088686">
        <id>Q14847-2</id>
        <label>LASP1</label>
    </interactant>
    <organismsDiffer>false</organismsDiffer>
    <experiments>3</experiments>
</comment>
<comment type="interaction">
    <interactant intactId="EBI-11282723">
        <id>Q9Y5Z0</id>
    </interactant>
    <interactant intactId="EBI-9088829">
        <id>Q6DKI2</id>
        <label>LGALS9C</label>
    </interactant>
    <organismsDiffer>false</organismsDiffer>
    <experiments>3</experiments>
</comment>
<comment type="interaction">
    <interactant intactId="EBI-11282723">
        <id>Q9Y5Z0</id>
    </interactant>
    <interactant intactId="EBI-751664">
        <id>P42679</id>
        <label>MATK</label>
    </interactant>
    <organismsDiffer>false</organismsDiffer>
    <experiments>3</experiments>
</comment>
<comment type="interaction">
    <interactant intactId="EBI-11282723">
        <id>Q9Y5Z0</id>
    </interactant>
    <interactant intactId="EBI-25839575">
        <id>Q8WZ73-3</id>
        <label>RFFL</label>
    </interactant>
    <organismsDiffer>false</organismsDiffer>
    <experiments>3</experiments>
</comment>
<comment type="interaction">
    <interactant intactId="EBI-11282723">
        <id>Q9Y5Z0</id>
    </interactant>
    <interactant intactId="EBI-9658624">
        <id>Q9BSD3</id>
        <label>RHNO1</label>
    </interactant>
    <organismsDiffer>false</organismsDiffer>
    <experiments>3</experiments>
</comment>
<comment type="interaction">
    <interactant intactId="EBI-11282723">
        <id>Q9Y5Z0</id>
    </interactant>
    <interactant intactId="EBI-25837959">
        <id>Q9BY12-3</id>
        <label>SCAPER</label>
    </interactant>
    <organismsDiffer>false</organismsDiffer>
    <experiments>3</experiments>
</comment>
<comment type="interaction">
    <interactant intactId="EBI-11282723">
        <id>Q9Y5Z0</id>
    </interactant>
    <interactant intactId="EBI-714135">
        <id>O75558</id>
        <label>STX11</label>
    </interactant>
    <organismsDiffer>false</organismsDiffer>
    <experiments>3</experiments>
</comment>
<comment type="interaction">
    <interactant intactId="EBI-11282723">
        <id>Q9Y5Z0</id>
    </interactant>
    <interactant intactId="EBI-3923210">
        <id>Q8TDR4</id>
        <label>TCP10L</label>
    </interactant>
    <organismsDiffer>false</organismsDiffer>
    <experiments>3</experiments>
</comment>
<comment type="interaction">
    <interactant intactId="EBI-11282723">
        <id>Q9Y5Z0</id>
    </interactant>
    <interactant intactId="EBI-12090309">
        <id>Q9BXU0</id>
        <label>TEX12</label>
    </interactant>
    <organismsDiffer>false</organismsDiffer>
    <experiments>3</experiments>
</comment>
<comment type="interaction">
    <interactant intactId="EBI-11282723">
        <id>Q9Y5Z0</id>
    </interactant>
    <interactant intactId="EBI-9089156">
        <id>Q8IUR5-4</id>
        <label>TMTC1</label>
    </interactant>
    <organismsDiffer>false</organismsDiffer>
    <experiments>3</experiments>
</comment>
<comment type="interaction">
    <interactant intactId="EBI-11282723">
        <id>Q9Y5Z0</id>
    </interactant>
    <interactant intactId="EBI-10977875">
        <id>P06753-2</id>
        <label>TPM3</label>
    </interactant>
    <organismsDiffer>false</organismsDiffer>
    <experiments>3</experiments>
</comment>
<comment type="subcellular location">
    <subcellularLocation>
        <location evidence="16">Cell membrane</location>
        <topology evidence="1">Single-pass type I membrane protein</topology>
    </subcellularLocation>
    <subcellularLocation>
        <location evidence="11">Golgi apparatus</location>
    </subcellularLocation>
    <subcellularLocation>
        <location>Endoplasmic reticulum</location>
    </subcellularLocation>
    <subcellularLocation>
        <location>Endosome</location>
    </subcellularLocation>
    <subcellularLocation>
        <location evidence="17">Melanosome</location>
    </subcellularLocation>
    <text evidence="17">Colocalizes with PMEL in stage I and II melanosomes.</text>
</comment>
<comment type="alternative products">
    <event type="alternative splicing"/>
    <isoform>
        <id>Q9Y5Z0-1</id>
        <name>1</name>
        <name>Isoform A</name>
        <sequence type="displayed"/>
    </isoform>
    <isoform>
        <id>Q9Y5Z0-2</id>
        <name>2</name>
        <name>Isoform C</name>
        <sequence type="described" ref="VSP_038025"/>
    </isoform>
    <isoform>
        <id>Q9Y5Z0-3</id>
        <name>3</name>
        <name>Isoform B</name>
        <sequence type="described" ref="VSP_038026 VSP_038027"/>
    </isoform>
    <isoform>
        <id>Q9Y5Z0-4</id>
        <name>4</name>
        <sequence type="described" ref="VSP_038024"/>
    </isoform>
    <isoform>
        <id>Q9Y5Z0-5</id>
        <name>5</name>
        <sequence type="described" ref="VSP_038023"/>
    </isoform>
</comment>
<comment type="tissue specificity">
    <text evidence="3 4 5 6 7 8 9">Brain. Present in neurons within the hippocampus, frontal cortex and temporal cortex (at protein level). Expressed at low levels in most peripheral tissues and at higher levels in colon, kidney, pancreas, placenta, prostate, stomach and trachea. Expressed at low levels in the brain. Found in spinal cord, medulla oblongata, substantia nigra and locus coruleus. Expressed in the ductal epithelium of both normal and malignant prostate.</text>
</comment>
<comment type="induction">
    <text evidence="7">Up-regulated in primary breast and colon tumors and liver metastasis.</text>
</comment>
<comment type="PTM">
    <text evidence="10 11">Undergoes autoproteolytic cleavage.</text>
</comment>
<comment type="PTM">
    <text evidence="5 9">Glycosylated.</text>
</comment>
<comment type="similarity">
    <text evidence="21">Belongs to the peptidase A1 family.</text>
</comment>
<organism>
    <name type="scientific">Homo sapiens</name>
    <name type="common">Human</name>
    <dbReference type="NCBI Taxonomy" id="9606"/>
    <lineage>
        <taxon>Eukaryota</taxon>
        <taxon>Metazoa</taxon>
        <taxon>Chordata</taxon>
        <taxon>Craniata</taxon>
        <taxon>Vertebrata</taxon>
        <taxon>Euteleostomi</taxon>
        <taxon>Mammalia</taxon>
        <taxon>Eutheria</taxon>
        <taxon>Euarchontoglires</taxon>
        <taxon>Primates</taxon>
        <taxon>Haplorrhini</taxon>
        <taxon>Catarrhini</taxon>
        <taxon>Hominidae</taxon>
        <taxon>Homo</taxon>
    </lineage>
</organism>
<evidence type="ECO:0000255" key="1"/>
<evidence type="ECO:0000255" key="2">
    <source>
        <dbReference type="PROSITE-ProRule" id="PRU01103"/>
    </source>
</evidence>
<evidence type="ECO:0000269" key="3">
    <source>
    </source>
</evidence>
<evidence type="ECO:0000269" key="4">
    <source>
    </source>
</evidence>
<evidence type="ECO:0000269" key="5">
    <source>
    </source>
</evidence>
<evidence type="ECO:0000269" key="6">
    <source>
    </source>
</evidence>
<evidence type="ECO:0000269" key="7">
    <source>
    </source>
</evidence>
<evidence type="ECO:0000269" key="8">
    <source>
    </source>
</evidence>
<evidence type="ECO:0000269" key="9">
    <source>
    </source>
</evidence>
<evidence type="ECO:0000269" key="10">
    <source>
    </source>
</evidence>
<evidence type="ECO:0000269" key="11">
    <source>
    </source>
</evidence>
<evidence type="ECO:0000269" key="12">
    <source>
    </source>
</evidence>
<evidence type="ECO:0000269" key="13">
    <source>
    </source>
</evidence>
<evidence type="ECO:0000269" key="14">
    <source>
    </source>
</evidence>
<evidence type="ECO:0000269" key="15">
    <source>
    </source>
</evidence>
<evidence type="ECO:0000269" key="16">
    <source>
    </source>
</evidence>
<evidence type="ECO:0000269" key="17">
    <source>
    </source>
</evidence>
<evidence type="ECO:0000303" key="18">
    <source>
    </source>
</evidence>
<evidence type="ECO:0000303" key="19">
    <source>
    </source>
</evidence>
<evidence type="ECO:0000303" key="20">
    <source ref="8"/>
</evidence>
<evidence type="ECO:0000305" key="21"/>
<evidence type="ECO:0007829" key="22">
    <source>
        <dbReference type="PDB" id="3ZKN"/>
    </source>
</evidence>
<evidence type="ECO:0007829" key="23">
    <source>
        <dbReference type="PDB" id="4BFB"/>
    </source>
</evidence>
<evidence type="ECO:0007829" key="24">
    <source>
        <dbReference type="PDB" id="6JSZ"/>
    </source>
</evidence>
<evidence type="ECO:0007829" key="25">
    <source>
        <dbReference type="PDB" id="6UJ0"/>
    </source>
</evidence>
<evidence type="ECO:0007829" key="26">
    <source>
        <dbReference type="PDB" id="6UJ1"/>
    </source>
</evidence>
<evidence type="ECO:0007829" key="27">
    <source>
        <dbReference type="PDB" id="7D5B"/>
    </source>
</evidence>
<evidence type="ECO:0007829" key="28">
    <source>
        <dbReference type="PDB" id="7F1G"/>
    </source>
</evidence>
<evidence type="ECO:0007829" key="29">
    <source>
        <dbReference type="PDB" id="7N4N"/>
    </source>
</evidence>
<proteinExistence type="evidence at protein level"/>
<reference key="1">
    <citation type="journal article" date="1999" name="Nature">
        <title>Membrane-anchored aspartyl protease with Alzheimer's disease beta-secretase activity.</title>
        <authorList>
            <person name="Yan R."/>
            <person name="Bienkowski M.J."/>
            <person name="Shuck M.E."/>
            <person name="Miao H."/>
            <person name="Tory M.C."/>
            <person name="Pauley A.M."/>
            <person name="Brashier J.R."/>
            <person name="Stratman N.C."/>
            <person name="Mathews W.R."/>
            <person name="Buhl A.E."/>
            <person name="Carter D.B."/>
            <person name="Tomasselli A.G."/>
            <person name="Parodi L.A."/>
            <person name="Heinrikson R.L."/>
            <person name="Gurney M.E."/>
        </authorList>
    </citation>
    <scope>NUCLEOTIDE SEQUENCE [MRNA] (ISOFORM 1)</scope>
    <scope>PROTEIN SEQUENCE OF N-TERMINUS</scope>
    <scope>FUNCTION</scope>
    <scope>TISSUE SPECIFICITY</scope>
</reference>
<reference key="2">
    <citation type="journal article" date="2000" name="Biochim. Biophys. Acta">
        <title>Identification of a novel aspartic-like protease differentially expressed in human breast cancer cell lines.</title>
        <authorList>
            <person name="Xin H."/>
            <person name="Stephans J.C."/>
            <person name="Duan X."/>
            <person name="Harrowe G."/>
            <person name="Kim E."/>
            <person name="Grieshammer U."/>
            <person name="Kingsley C."/>
            <person name="Giese K."/>
        </authorList>
    </citation>
    <scope>NUCLEOTIDE SEQUENCE [MRNA] (ISOFORM 1)</scope>
    <scope>AUTOCATALYTIC CLEAVAGE</scope>
    <scope>INDUCTION</scope>
    <scope>TISSUE SPECIFICITY</scope>
    <scope>MUTAGENESIS OF ASP-110 AND ASP-303</scope>
    <source>
        <tissue>Bone marrow</tissue>
    </source>
</reference>
<reference key="3">
    <citation type="journal article" date="2000" name="Cytogenet. Cell Genet.">
        <title>A new aspartyl protease on 21q22.3, BACE2, is highly similar to Alzheimer's amyloid precursor protein beta-secretase.</title>
        <authorList>
            <person name="Solans A."/>
            <person name="Estivill X."/>
            <person name="de La Luna S."/>
        </authorList>
    </citation>
    <scope>NUCLEOTIDE SEQUENCE [MRNA] (ISOFORMS 1; 2 AND 3)</scope>
    <scope>TISSUE SPECIFICITY</scope>
</reference>
<reference key="4">
    <citation type="journal article" date="2000" name="FEBS Lett.">
        <title>The gene encoding DRAP (BACE2), a glycosylated transmembrane protein of the aspartic protease family, maps to the down critical region.</title>
        <authorList>
            <person name="Acquati F."/>
            <person name="Accarino M.P."/>
            <person name="Nucci C."/>
            <person name="Fumagalli P."/>
            <person name="Jovine L."/>
            <person name="Ottolenghi S."/>
            <person name="Taramelli R."/>
        </authorList>
    </citation>
    <scope>NUCLEOTIDE SEQUENCE [MRNA] (ISOFORM 1)</scope>
    <scope>TISSUE SPECIFICITY</scope>
    <scope>GLYCOSYLATION</scope>
</reference>
<reference key="5">
    <citation type="journal article" date="2000" name="J. Biol. Chem.">
        <title>Expression analysis of BACE2 in brain and peripheral tissues.</title>
        <authorList>
            <person name="Bennett B.D."/>
            <person name="Babu-Khan S."/>
            <person name="Loeloff R."/>
            <person name="Louis J.-C."/>
            <person name="Curran E."/>
            <person name="Citron M."/>
            <person name="Vassar R."/>
        </authorList>
    </citation>
    <scope>NUCLEOTIDE SEQUENCE [MRNA] (ISOFORM 1)</scope>
    <scope>TISSUE SPECIFICITY</scope>
</reference>
<reference key="6">
    <citation type="journal article" date="2000" name="Mol. Cell. Neurosci.">
        <title>ASP1 (BACE2) cleaves the amyloid precursor protein at the beta-secretase site.</title>
        <authorList>
            <person name="Hussain I."/>
            <person name="Powell D.J."/>
            <person name="Howlett D.R."/>
            <person name="Chapman G.A."/>
            <person name="Gilmour L."/>
            <person name="Murdock P.R."/>
            <person name="Tew D.G."/>
            <person name="Meek T.D."/>
            <person name="Chapman C."/>
            <person name="Schneider K."/>
            <person name="Ratcliffe S.J."/>
            <person name="Tattersall D."/>
            <person name="Testa T.T."/>
            <person name="Southan C."/>
            <person name="Ryan D.M."/>
            <person name="Simmons D.L."/>
            <person name="Walsh F.S."/>
            <person name="Dingwall C."/>
            <person name="Christie G."/>
        </authorList>
    </citation>
    <scope>NUCLEOTIDE SEQUENCE [MRNA] (ISOFORM 1)</scope>
    <scope>PROTEIN SEQUENCE OF N-TERMINUS</scope>
    <scope>FUNCTION</scope>
    <scope>SUBCELLULAR LOCATION</scope>
    <scope>TISSUE SPECIFICITY</scope>
    <scope>GLYCOSYLATION</scope>
    <scope>CATALYTIC ACTIVITY</scope>
</reference>
<reference key="7">
    <citation type="journal article" date="2000" name="Proc. Natl. Acad. Sci. U.S.A.">
        <title>Human aspartic protease memapsin 2 cleaves the beta-secretase site of beta-amyloid precursor protein.</title>
        <authorList>
            <person name="Lin X."/>
            <person name="Koelsch G."/>
            <person name="Wu S."/>
            <person name="Downs D."/>
            <person name="Dashti A."/>
            <person name="Tang J."/>
        </authorList>
    </citation>
    <scope>NUCLEOTIDE SEQUENCE [MRNA] (ISOFORM 1)</scope>
    <scope>TISSUE SPECIFICITY</scope>
</reference>
<reference key="8">
    <citation type="submission" date="1999-12" db="EMBL/GenBank/DDBJ databases">
        <authorList>
            <person name="Li Y."/>
            <person name="Huang Q."/>
            <person name="Peng Y."/>
            <person name="Song H."/>
            <person name="Yu Y."/>
            <person name="Xu S."/>
            <person name="Ren S."/>
            <person name="Chen Z."/>
            <person name="Han Z."/>
        </authorList>
    </citation>
    <scope>NUCLEOTIDE SEQUENCE [LARGE SCALE MRNA] (ISOFORM 4)</scope>
    <source>
        <tissue>Pheochromocytoma</tissue>
    </source>
</reference>
<reference key="9">
    <citation type="journal article" date="2003" name="Genome Res.">
        <title>The secreted protein discovery initiative (SPDI), a large-scale effort to identify novel human secreted and transmembrane proteins: a bioinformatics assessment.</title>
        <authorList>
            <person name="Clark H.F."/>
            <person name="Gurney A.L."/>
            <person name="Abaya E."/>
            <person name="Baker K."/>
            <person name="Baldwin D.T."/>
            <person name="Brush J."/>
            <person name="Chen J."/>
            <person name="Chow B."/>
            <person name="Chui C."/>
            <person name="Crowley C."/>
            <person name="Currell B."/>
            <person name="Deuel B."/>
            <person name="Dowd P."/>
            <person name="Eaton D."/>
            <person name="Foster J.S."/>
            <person name="Grimaldi C."/>
            <person name="Gu Q."/>
            <person name="Hass P.E."/>
            <person name="Heldens S."/>
            <person name="Huang A."/>
            <person name="Kim H.S."/>
            <person name="Klimowski L."/>
            <person name="Jin Y."/>
            <person name="Johnson S."/>
            <person name="Lee J."/>
            <person name="Lewis L."/>
            <person name="Liao D."/>
            <person name="Mark M.R."/>
            <person name="Robbie E."/>
            <person name="Sanchez C."/>
            <person name="Schoenfeld J."/>
            <person name="Seshagiri S."/>
            <person name="Simmons L."/>
            <person name="Singh J."/>
            <person name="Smith V."/>
            <person name="Stinson J."/>
            <person name="Vagts A."/>
            <person name="Vandlen R.L."/>
            <person name="Watanabe C."/>
            <person name="Wieand D."/>
            <person name="Woods K."/>
            <person name="Xie M.-H."/>
            <person name="Yansura D.G."/>
            <person name="Yi S."/>
            <person name="Yu G."/>
            <person name="Yuan J."/>
            <person name="Zhang M."/>
            <person name="Zhang Z."/>
            <person name="Goddard A.D."/>
            <person name="Wood W.I."/>
            <person name="Godowski P.J."/>
            <person name="Gray A.M."/>
        </authorList>
    </citation>
    <scope>NUCLEOTIDE SEQUENCE [LARGE SCALE MRNA] (ISOFORM 1)</scope>
</reference>
<reference key="10">
    <citation type="journal article" date="2004" name="Nat. Genet.">
        <title>Complete sequencing and characterization of 21,243 full-length human cDNAs.</title>
        <authorList>
            <person name="Ota T."/>
            <person name="Suzuki Y."/>
            <person name="Nishikawa T."/>
            <person name="Otsuki T."/>
            <person name="Sugiyama T."/>
            <person name="Irie R."/>
            <person name="Wakamatsu A."/>
            <person name="Hayashi K."/>
            <person name="Sato H."/>
            <person name="Nagai K."/>
            <person name="Kimura K."/>
            <person name="Makita H."/>
            <person name="Sekine M."/>
            <person name="Obayashi M."/>
            <person name="Nishi T."/>
            <person name="Shibahara T."/>
            <person name="Tanaka T."/>
            <person name="Ishii S."/>
            <person name="Yamamoto J."/>
            <person name="Saito K."/>
            <person name="Kawai Y."/>
            <person name="Isono Y."/>
            <person name="Nakamura Y."/>
            <person name="Nagahari K."/>
            <person name="Murakami K."/>
            <person name="Yasuda T."/>
            <person name="Iwayanagi T."/>
            <person name="Wagatsuma M."/>
            <person name="Shiratori A."/>
            <person name="Sudo H."/>
            <person name="Hosoiri T."/>
            <person name="Kaku Y."/>
            <person name="Kodaira H."/>
            <person name="Kondo H."/>
            <person name="Sugawara M."/>
            <person name="Takahashi M."/>
            <person name="Kanda K."/>
            <person name="Yokoi T."/>
            <person name="Furuya T."/>
            <person name="Kikkawa E."/>
            <person name="Omura Y."/>
            <person name="Abe K."/>
            <person name="Kamihara K."/>
            <person name="Katsuta N."/>
            <person name="Sato K."/>
            <person name="Tanikawa M."/>
            <person name="Yamazaki M."/>
            <person name="Ninomiya K."/>
            <person name="Ishibashi T."/>
            <person name="Yamashita H."/>
            <person name="Murakawa K."/>
            <person name="Fujimori K."/>
            <person name="Tanai H."/>
            <person name="Kimata M."/>
            <person name="Watanabe M."/>
            <person name="Hiraoka S."/>
            <person name="Chiba Y."/>
            <person name="Ishida S."/>
            <person name="Ono Y."/>
            <person name="Takiguchi S."/>
            <person name="Watanabe S."/>
            <person name="Yosida M."/>
            <person name="Hotuta T."/>
            <person name="Kusano J."/>
            <person name="Kanehori K."/>
            <person name="Takahashi-Fujii A."/>
            <person name="Hara H."/>
            <person name="Tanase T.-O."/>
            <person name="Nomura Y."/>
            <person name="Togiya S."/>
            <person name="Komai F."/>
            <person name="Hara R."/>
            <person name="Takeuchi K."/>
            <person name="Arita M."/>
            <person name="Imose N."/>
            <person name="Musashino K."/>
            <person name="Yuuki H."/>
            <person name="Oshima A."/>
            <person name="Sasaki N."/>
            <person name="Aotsuka S."/>
            <person name="Yoshikawa Y."/>
            <person name="Matsunawa H."/>
            <person name="Ichihara T."/>
            <person name="Shiohata N."/>
            <person name="Sano S."/>
            <person name="Moriya S."/>
            <person name="Momiyama H."/>
            <person name="Satoh N."/>
            <person name="Takami S."/>
            <person name="Terashima Y."/>
            <person name="Suzuki O."/>
            <person name="Nakagawa S."/>
            <person name="Senoh A."/>
            <person name="Mizoguchi H."/>
            <person name="Goto Y."/>
            <person name="Shimizu F."/>
            <person name="Wakebe H."/>
            <person name="Hishigaki H."/>
            <person name="Watanabe T."/>
            <person name="Sugiyama A."/>
            <person name="Takemoto M."/>
            <person name="Kawakami B."/>
            <person name="Yamazaki M."/>
            <person name="Watanabe K."/>
            <person name="Kumagai A."/>
            <person name="Itakura S."/>
            <person name="Fukuzumi Y."/>
            <person name="Fujimori Y."/>
            <person name="Komiyama M."/>
            <person name="Tashiro H."/>
            <person name="Tanigami A."/>
            <person name="Fujiwara T."/>
            <person name="Ono T."/>
            <person name="Yamada K."/>
            <person name="Fujii Y."/>
            <person name="Ozaki K."/>
            <person name="Hirao M."/>
            <person name="Ohmori Y."/>
            <person name="Kawabata A."/>
            <person name="Hikiji T."/>
            <person name="Kobatake N."/>
            <person name="Inagaki H."/>
            <person name="Ikema Y."/>
            <person name="Okamoto S."/>
            <person name="Okitani R."/>
            <person name="Kawakami T."/>
            <person name="Noguchi S."/>
            <person name="Itoh T."/>
            <person name="Shigeta K."/>
            <person name="Senba T."/>
            <person name="Matsumura K."/>
            <person name="Nakajima Y."/>
            <person name="Mizuno T."/>
            <person name="Morinaga M."/>
            <person name="Sasaki M."/>
            <person name="Togashi T."/>
            <person name="Oyama M."/>
            <person name="Hata H."/>
            <person name="Watanabe M."/>
            <person name="Komatsu T."/>
            <person name="Mizushima-Sugano J."/>
            <person name="Satoh T."/>
            <person name="Shirai Y."/>
            <person name="Takahashi Y."/>
            <person name="Nakagawa K."/>
            <person name="Okumura K."/>
            <person name="Nagase T."/>
            <person name="Nomura N."/>
            <person name="Kikuchi H."/>
            <person name="Masuho Y."/>
            <person name="Yamashita R."/>
            <person name="Nakai K."/>
            <person name="Yada T."/>
            <person name="Nakamura Y."/>
            <person name="Ohara O."/>
            <person name="Isogai T."/>
            <person name="Sugano S."/>
        </authorList>
    </citation>
    <scope>NUCLEOTIDE SEQUENCE [LARGE SCALE MRNA] (ISOFORMS 1 AND 5)</scope>
    <source>
        <tissue>Ovary</tissue>
        <tissue>Stomach</tissue>
    </source>
</reference>
<reference key="11">
    <citation type="journal article" date="2000" name="Nature">
        <title>The DNA sequence of human chromosome 21.</title>
        <authorList>
            <person name="Hattori M."/>
            <person name="Fujiyama A."/>
            <person name="Taylor T.D."/>
            <person name="Watanabe H."/>
            <person name="Yada T."/>
            <person name="Park H.-S."/>
            <person name="Toyoda A."/>
            <person name="Ishii K."/>
            <person name="Totoki Y."/>
            <person name="Choi D.-K."/>
            <person name="Groner Y."/>
            <person name="Soeda E."/>
            <person name="Ohki M."/>
            <person name="Takagi T."/>
            <person name="Sakaki Y."/>
            <person name="Taudien S."/>
            <person name="Blechschmidt K."/>
            <person name="Polley A."/>
            <person name="Menzel U."/>
            <person name="Delabar J."/>
            <person name="Kumpf K."/>
            <person name="Lehmann R."/>
            <person name="Patterson D."/>
            <person name="Reichwald K."/>
            <person name="Rump A."/>
            <person name="Schillhabel M."/>
            <person name="Schudy A."/>
            <person name="Zimmermann W."/>
            <person name="Rosenthal A."/>
            <person name="Kudoh J."/>
            <person name="Shibuya K."/>
            <person name="Kawasaki K."/>
            <person name="Asakawa S."/>
            <person name="Shintani A."/>
            <person name="Sasaki T."/>
            <person name="Nagamine K."/>
            <person name="Mitsuyama S."/>
            <person name="Antonarakis S.E."/>
            <person name="Minoshima S."/>
            <person name="Shimizu N."/>
            <person name="Nordsiek G."/>
            <person name="Hornischer K."/>
            <person name="Brandt P."/>
            <person name="Scharfe M."/>
            <person name="Schoen O."/>
            <person name="Desario A."/>
            <person name="Reichelt J."/>
            <person name="Kauer G."/>
            <person name="Bloecker H."/>
            <person name="Ramser J."/>
            <person name="Beck A."/>
            <person name="Klages S."/>
            <person name="Hennig S."/>
            <person name="Riesselmann L."/>
            <person name="Dagand E."/>
            <person name="Wehrmeyer S."/>
            <person name="Borzym K."/>
            <person name="Gardiner K."/>
            <person name="Nizetic D."/>
            <person name="Francis F."/>
            <person name="Lehrach H."/>
            <person name="Reinhardt R."/>
            <person name="Yaspo M.-L."/>
        </authorList>
    </citation>
    <scope>NUCLEOTIDE SEQUENCE [LARGE SCALE GENOMIC DNA]</scope>
</reference>
<reference key="12">
    <citation type="submission" date="2005-09" db="EMBL/GenBank/DDBJ databases">
        <authorList>
            <person name="Mural R.J."/>
            <person name="Istrail S."/>
            <person name="Sutton G.G."/>
            <person name="Florea L."/>
            <person name="Halpern A.L."/>
            <person name="Mobarry C.M."/>
            <person name="Lippert R."/>
            <person name="Walenz B."/>
            <person name="Shatkay H."/>
            <person name="Dew I."/>
            <person name="Miller J.R."/>
            <person name="Flanigan M.J."/>
            <person name="Edwards N.J."/>
            <person name="Bolanos R."/>
            <person name="Fasulo D."/>
            <person name="Halldorsson B.V."/>
            <person name="Hannenhalli S."/>
            <person name="Turner R."/>
            <person name="Yooseph S."/>
            <person name="Lu F."/>
            <person name="Nusskern D.R."/>
            <person name="Shue B.C."/>
            <person name="Zheng X.H."/>
            <person name="Zhong F."/>
            <person name="Delcher A.L."/>
            <person name="Huson D.H."/>
            <person name="Kravitz S.A."/>
            <person name="Mouchard L."/>
            <person name="Reinert K."/>
            <person name="Remington K.A."/>
            <person name="Clark A.G."/>
            <person name="Waterman M.S."/>
            <person name="Eichler E.E."/>
            <person name="Adams M.D."/>
            <person name="Hunkapiller M.W."/>
            <person name="Myers E.W."/>
            <person name="Venter J.C."/>
        </authorList>
    </citation>
    <scope>NUCLEOTIDE SEQUENCE [LARGE SCALE GENOMIC DNA]</scope>
</reference>
<reference key="13">
    <citation type="journal article" date="2004" name="Genome Res.">
        <title>The status, quality, and expansion of the NIH full-length cDNA project: the Mammalian Gene Collection (MGC).</title>
        <authorList>
            <consortium name="The MGC Project Team"/>
        </authorList>
    </citation>
    <scope>NUCLEOTIDE SEQUENCE [LARGE SCALE MRNA] (ISOFORM 1)</scope>
    <source>
        <tissue>Skin</tissue>
    </source>
</reference>
<reference key="14">
    <citation type="journal article" date="2005" name="FASEB J.">
        <title>Distinct transcriptional regulation and function of the human BACE2 and BACE1 genes.</title>
        <authorList>
            <person name="Sun X."/>
            <person name="Wang Y."/>
            <person name="Qing H."/>
            <person name="Christensen M.A."/>
            <person name="Liu Y."/>
            <person name="Zhou W."/>
            <person name="Tong Y."/>
            <person name="Xiao C."/>
            <person name="Huang Y."/>
            <person name="Zhang S."/>
            <person name="Liu X."/>
            <person name="Song W."/>
        </authorList>
    </citation>
    <scope>NUCLEOTIDE SEQUENCE [GENOMIC DNA] OF 1-47</scope>
    <scope>FUNCTION</scope>
</reference>
<reference key="15">
    <citation type="journal article" date="2001" name="J. Biol. Chem.">
        <title>BACE2 functions as an alternative alpha-secretase in cells.</title>
        <authorList>
            <person name="Yan R."/>
            <person name="Munzner J.B."/>
            <person name="Shuck M.E."/>
            <person name="Bienkowski M.J."/>
        </authorList>
    </citation>
    <scope>PROTEIN SEQUENCE OF N-TERMINUS</scope>
    <scope>AUTOCATALYTIC CLEAVAGE</scope>
    <scope>FUNCTION</scope>
    <scope>SUBCELLULAR LOCATION</scope>
</reference>
<reference key="16">
    <citation type="journal article" date="2006" name="FASEB J.">
        <title>BACE2, as a novel APP theta-secretase, is not responsible for the pathogenesis of Alzheimer's disease in Down syndrome.</title>
        <authorList>
            <person name="Sun X."/>
            <person name="He G."/>
            <person name="Song W."/>
        </authorList>
    </citation>
    <scope>PROTEIN SEQUENCE OF N-TERMINUS</scope>
    <scope>FUNCTION</scope>
</reference>
<reference key="17">
    <citation type="journal article" date="2006" name="J. Mol. Biol.">
        <title>Crystal structure of human BACE2 in complex with a hydroxyethylamine transition-state inhibitor.</title>
        <authorList>
            <person name="Ostermann N."/>
            <person name="Eder J."/>
            <person name="Eidhoff U."/>
            <person name="Zink F."/>
            <person name="Hassiepen U."/>
            <person name="Worpenberg S."/>
            <person name="Maibaum J."/>
            <person name="Simic O."/>
            <person name="Hommel U."/>
            <person name="Gerhartz B."/>
        </authorList>
    </citation>
    <scope>PROTEIN SEQUENCE OF N-TERMINUS</scope>
    <scope>X-RAY CRYSTALLOGRAPHY (3.1 ANGSTROMS) OF 78-460</scope>
    <scope>SUBUNIT</scope>
    <scope>DISULFIDE BONDS</scope>
</reference>
<reference key="18">
    <citation type="journal article" date="2001" name="J. Biol. Chem.">
        <title>Prodomain processing of Asp1 (BACE2) is autocatalytic.</title>
        <authorList>
            <person name="Hussain I."/>
            <person name="Christie G."/>
            <person name="Schneider K."/>
            <person name="Moore S."/>
            <person name="Dingwall C."/>
        </authorList>
    </citation>
    <scope>AUTOCATALYTIC CLEAVAGE</scope>
    <scope>MUTAGENESIS OF ASP-110</scope>
</reference>
<reference key="19">
    <citation type="journal article" date="2006" name="Eur. J. Neurosci.">
        <title>Reticulons RTN3 and RTN4-B/C interact with BACE1 and inhibit its ability to produce amyloid beta-protein.</title>
        <authorList>
            <person name="Murayama K.S."/>
            <person name="Kametani F."/>
            <person name="Saito S."/>
            <person name="Kume H."/>
            <person name="Akiyama H."/>
            <person name="Araki W."/>
        </authorList>
    </citation>
    <scope>INTERACTION WITH RTN3 AND RTN4</scope>
</reference>
<reference key="20">
    <citation type="journal article" date="2011" name="Cell Metab.">
        <title>Bace2 is a beta cell-enriched protease that regulates pancreatic beta cell function and mass.</title>
        <authorList>
            <person name="Esterhazy D."/>
            <person name="Stuetzer I."/>
            <person name="Wang H."/>
            <person name="Rechsteiner M.P."/>
            <person name="Beauchamp J."/>
            <person name="Doebeli H."/>
            <person name="Hilpert H."/>
            <person name="Matile H."/>
            <person name="Prummer M."/>
            <person name="Schmidt A."/>
            <person name="Lieske N."/>
            <person name="Boehm B."/>
            <person name="Marselli L."/>
            <person name="Bosco D."/>
            <person name="Kerr-Conte J."/>
            <person name="Aebersold R."/>
            <person name="Spinas G.A."/>
            <person name="Moch H."/>
            <person name="Migliorini C."/>
            <person name="Stoffel M."/>
        </authorList>
    </citation>
    <scope>SUBCELLULAR LOCATION</scope>
    <scope>FUNCTION</scope>
    <scope>CATALYTIC ACTIVITY</scope>
</reference>
<reference key="21">
    <citation type="journal article" date="2013" name="Proc. Natl. Acad. Sci. U.S.A.">
        <title>BACE2 processes PMEL to form the melanosome amyloid matrix in pigment cells.</title>
        <authorList>
            <person name="Rochin L."/>
            <person name="Hurbain I."/>
            <person name="Serneels L."/>
            <person name="Fort C."/>
            <person name="Watt B."/>
            <person name="Leblanc P."/>
            <person name="Marks M.S."/>
            <person name="De Strooper B."/>
            <person name="Raposo G."/>
            <person name="van Niel G."/>
        </authorList>
    </citation>
    <scope>FUNCTION</scope>
    <scope>SUBCELLULAR LOCATION</scope>
</reference>
<dbReference type="EC" id="3.4.23.45" evidence="16"/>
<dbReference type="EMBL" id="AF200342">
    <property type="protein sequence ID" value="AAF17078.1"/>
    <property type="molecule type" value="mRNA"/>
</dbReference>
<dbReference type="EMBL" id="AF117892">
    <property type="protein sequence ID" value="AAD45240.1"/>
    <property type="molecule type" value="mRNA"/>
</dbReference>
<dbReference type="EMBL" id="AF178532">
    <property type="protein sequence ID" value="AAF29494.1"/>
    <property type="molecule type" value="mRNA"/>
</dbReference>
<dbReference type="EMBL" id="AF188276">
    <property type="protein sequence ID" value="AAF35835.1"/>
    <property type="molecule type" value="mRNA"/>
</dbReference>
<dbReference type="EMBL" id="AF188277">
    <property type="protein sequence ID" value="AAF35836.1"/>
    <property type="molecule type" value="mRNA"/>
</dbReference>
<dbReference type="EMBL" id="AF050171">
    <property type="protein sequence ID" value="AAD45963.1"/>
    <property type="molecule type" value="mRNA"/>
</dbReference>
<dbReference type="EMBL" id="AF204944">
    <property type="protein sequence ID" value="AAF26368.1"/>
    <property type="molecule type" value="mRNA"/>
</dbReference>
<dbReference type="EMBL" id="AF200192">
    <property type="protein sequence ID" value="AAF13714.1"/>
    <property type="molecule type" value="mRNA"/>
</dbReference>
<dbReference type="EMBL" id="AF212252">
    <property type="protein sequence ID" value="AAG41783.1"/>
    <property type="molecule type" value="mRNA"/>
</dbReference>
<dbReference type="EMBL" id="AY358927">
    <property type="protein sequence ID" value="AAQ89286.1"/>
    <property type="molecule type" value="mRNA"/>
</dbReference>
<dbReference type="EMBL" id="AK075539">
    <property type="protein sequence ID" value="BAC11682.1"/>
    <property type="molecule type" value="mRNA"/>
</dbReference>
<dbReference type="EMBL" id="AK292056">
    <property type="protein sequence ID" value="BAF84745.1"/>
    <property type="molecule type" value="mRNA"/>
</dbReference>
<dbReference type="EMBL" id="AL163284">
    <property type="protein sequence ID" value="CAB90458.1"/>
    <property type="molecule type" value="Genomic_DNA"/>
</dbReference>
<dbReference type="EMBL" id="AL163285">
    <property type="protein sequence ID" value="CAB90554.1"/>
    <property type="molecule type" value="Genomic_DNA"/>
</dbReference>
<dbReference type="EMBL" id="CH471079">
    <property type="protein sequence ID" value="EAX09611.1"/>
    <property type="molecule type" value="Genomic_DNA"/>
</dbReference>
<dbReference type="EMBL" id="CH471079">
    <property type="protein sequence ID" value="EAX09613.1"/>
    <property type="molecule type" value="Genomic_DNA"/>
</dbReference>
<dbReference type="EMBL" id="BC014453">
    <property type="protein sequence ID" value="AAH14453.1"/>
    <property type="molecule type" value="mRNA"/>
</dbReference>
<dbReference type="EMBL" id="AY769996">
    <property type="protein sequence ID" value="AAX14808.1"/>
    <property type="molecule type" value="Genomic_DNA"/>
</dbReference>
<dbReference type="CCDS" id="CCDS13668.1">
    <molecule id="Q9Y5Z0-1"/>
</dbReference>
<dbReference type="CCDS" id="CCDS13669.1">
    <molecule id="Q9Y5Z0-2"/>
</dbReference>
<dbReference type="CCDS" id="CCDS13670.1">
    <molecule id="Q9Y5Z0-3"/>
</dbReference>
<dbReference type="RefSeq" id="NP_036237.2">
    <molecule id="Q9Y5Z0-1"/>
    <property type="nucleotide sequence ID" value="NM_012105.4"/>
</dbReference>
<dbReference type="RefSeq" id="NP_620476.1">
    <molecule id="Q9Y5Z0-2"/>
    <property type="nucleotide sequence ID" value="NM_138991.3"/>
</dbReference>
<dbReference type="RefSeq" id="NP_620477.1">
    <molecule id="Q9Y5Z0-3"/>
    <property type="nucleotide sequence ID" value="NM_138992.3"/>
</dbReference>
<dbReference type="PDB" id="2EWY">
    <property type="method" value="X-ray"/>
    <property type="resolution" value="3.10 A"/>
    <property type="chains" value="A/B/C/D=78-460"/>
</dbReference>
<dbReference type="PDB" id="3ZKG">
    <property type="method" value="X-ray"/>
    <property type="resolution" value="1.90 A"/>
    <property type="chains" value="A/B=75-460"/>
</dbReference>
<dbReference type="PDB" id="3ZKI">
    <property type="method" value="X-ray"/>
    <property type="resolution" value="2.40 A"/>
    <property type="chains" value="A/B=75-460"/>
</dbReference>
<dbReference type="PDB" id="3ZKM">
    <property type="method" value="X-ray"/>
    <property type="resolution" value="1.85 A"/>
    <property type="chains" value="A/B=75-460"/>
</dbReference>
<dbReference type="PDB" id="3ZKN">
    <property type="method" value="X-ray"/>
    <property type="resolution" value="2.00 A"/>
    <property type="chains" value="A/B=75-460"/>
</dbReference>
<dbReference type="PDB" id="3ZKQ">
    <property type="method" value="X-ray"/>
    <property type="resolution" value="1.51 A"/>
    <property type="chains" value="A=75-460"/>
</dbReference>
<dbReference type="PDB" id="3ZKS">
    <property type="method" value="X-ray"/>
    <property type="resolution" value="2.11 A"/>
    <property type="chains" value="A=75-460"/>
</dbReference>
<dbReference type="PDB" id="3ZKX">
    <property type="method" value="X-ray"/>
    <property type="resolution" value="2.37 A"/>
    <property type="chains" value="A=75-460"/>
</dbReference>
<dbReference type="PDB" id="3ZL7">
    <property type="method" value="X-ray"/>
    <property type="resolution" value="3.20 A"/>
    <property type="chains" value="A=75-460"/>
</dbReference>
<dbReference type="PDB" id="3ZLQ">
    <property type="method" value="X-ray"/>
    <property type="resolution" value="2.10 A"/>
    <property type="chains" value="A/B=75-460"/>
</dbReference>
<dbReference type="PDB" id="4BEL">
    <property type="method" value="X-ray"/>
    <property type="resolution" value="1.85 A"/>
    <property type="chains" value="A/B=75-460"/>
</dbReference>
<dbReference type="PDB" id="4BFB">
    <property type="method" value="X-ray"/>
    <property type="resolution" value="2.21 A"/>
    <property type="chains" value="A/B=75-460"/>
</dbReference>
<dbReference type="PDB" id="6JSZ">
    <property type="method" value="X-ray"/>
    <property type="resolution" value="1.53 A"/>
    <property type="chains" value="A=75-460"/>
</dbReference>
<dbReference type="PDB" id="6UJ0">
    <property type="method" value="X-ray"/>
    <property type="resolution" value="2.15 A"/>
    <property type="chains" value="A/B=1-460"/>
</dbReference>
<dbReference type="PDB" id="6UJ1">
    <property type="method" value="X-ray"/>
    <property type="resolution" value="3.03 A"/>
    <property type="chains" value="A/B=1-460"/>
</dbReference>
<dbReference type="PDB" id="7D5B">
    <property type="method" value="X-ray"/>
    <property type="resolution" value="1.31 A"/>
    <property type="chains" value="A=75-460"/>
</dbReference>
<dbReference type="PDB" id="7D5U">
    <property type="method" value="X-ray"/>
    <property type="resolution" value="2.04 A"/>
    <property type="chains" value="A=75-460"/>
</dbReference>
<dbReference type="PDB" id="7F1G">
    <property type="method" value="X-ray"/>
    <property type="resolution" value="1.50 A"/>
    <property type="chains" value="A=75-460"/>
</dbReference>
<dbReference type="PDB" id="7N4N">
    <property type="method" value="X-ray"/>
    <property type="resolution" value="1.41 A"/>
    <property type="chains" value="A=75-460"/>
</dbReference>
<dbReference type="PDBsum" id="2EWY"/>
<dbReference type="PDBsum" id="3ZKG"/>
<dbReference type="PDBsum" id="3ZKI"/>
<dbReference type="PDBsum" id="3ZKM"/>
<dbReference type="PDBsum" id="3ZKN"/>
<dbReference type="PDBsum" id="3ZKQ"/>
<dbReference type="PDBsum" id="3ZKS"/>
<dbReference type="PDBsum" id="3ZKX"/>
<dbReference type="PDBsum" id="3ZL7"/>
<dbReference type="PDBsum" id="3ZLQ"/>
<dbReference type="PDBsum" id="4BEL"/>
<dbReference type="PDBsum" id="4BFB"/>
<dbReference type="PDBsum" id="6JSZ"/>
<dbReference type="PDBsum" id="6UJ0"/>
<dbReference type="PDBsum" id="6UJ1"/>
<dbReference type="PDBsum" id="7D5B"/>
<dbReference type="PDBsum" id="7D5U"/>
<dbReference type="PDBsum" id="7F1G"/>
<dbReference type="PDBsum" id="7N4N"/>
<dbReference type="SMR" id="Q9Y5Z0"/>
<dbReference type="BioGRID" id="117353">
    <property type="interactions" value="103"/>
</dbReference>
<dbReference type="FunCoup" id="Q9Y5Z0">
    <property type="interactions" value="666"/>
</dbReference>
<dbReference type="IntAct" id="Q9Y5Z0">
    <property type="interactions" value="97"/>
</dbReference>
<dbReference type="MINT" id="Q9Y5Z0"/>
<dbReference type="STRING" id="9606.ENSP00000332979"/>
<dbReference type="BindingDB" id="Q9Y5Z0"/>
<dbReference type="ChEMBL" id="CHEMBL2525"/>
<dbReference type="GuidetoPHARMACOLOGY" id="2331"/>
<dbReference type="MEROPS" id="A01.041"/>
<dbReference type="TCDB" id="8.A.32.1.2">
    <property type="family name" value="the Beta-amyloid cleaving enzyme (bace1) family"/>
</dbReference>
<dbReference type="GlyCosmos" id="Q9Y5Z0">
    <property type="glycosylation" value="3 sites, 1 glycan"/>
</dbReference>
<dbReference type="GlyGen" id="Q9Y5Z0">
    <property type="glycosylation" value="6 sites, 3 N-linked glycans (2 sites), 2 O-linked glycans (3 sites)"/>
</dbReference>
<dbReference type="iPTMnet" id="Q9Y5Z0"/>
<dbReference type="PhosphoSitePlus" id="Q9Y5Z0"/>
<dbReference type="SwissPalm" id="Q9Y5Z0"/>
<dbReference type="BioMuta" id="BACE2"/>
<dbReference type="DMDM" id="6685260"/>
<dbReference type="jPOST" id="Q9Y5Z0"/>
<dbReference type="MassIVE" id="Q9Y5Z0"/>
<dbReference type="PaxDb" id="9606-ENSP00000332979"/>
<dbReference type="PeptideAtlas" id="Q9Y5Z0"/>
<dbReference type="ProteomicsDB" id="86546">
    <molecule id="Q9Y5Z0-1"/>
</dbReference>
<dbReference type="ProteomicsDB" id="86547">
    <molecule id="Q9Y5Z0-2"/>
</dbReference>
<dbReference type="ProteomicsDB" id="86548">
    <molecule id="Q9Y5Z0-3"/>
</dbReference>
<dbReference type="ProteomicsDB" id="86549">
    <molecule id="Q9Y5Z0-4"/>
</dbReference>
<dbReference type="ProteomicsDB" id="86550">
    <molecule id="Q9Y5Z0-5"/>
</dbReference>
<dbReference type="Pumba" id="Q9Y5Z0"/>
<dbReference type="ABCD" id="Q9Y5Z0">
    <property type="antibodies" value="3 sequenced antibodies"/>
</dbReference>
<dbReference type="Antibodypedia" id="4410">
    <property type="antibodies" value="545 antibodies from 37 providers"/>
</dbReference>
<dbReference type="DNASU" id="25825"/>
<dbReference type="Ensembl" id="ENST00000328735.10">
    <molecule id="Q9Y5Z0-3"/>
    <property type="protein sequence ID" value="ENSP00000333854.6"/>
    <property type="gene ID" value="ENSG00000182240.16"/>
</dbReference>
<dbReference type="Ensembl" id="ENST00000330333.11">
    <molecule id="Q9Y5Z0-1"/>
    <property type="protein sequence ID" value="ENSP00000332979.6"/>
    <property type="gene ID" value="ENSG00000182240.16"/>
</dbReference>
<dbReference type="Ensembl" id="ENST00000347667.5">
    <molecule id="Q9Y5Z0-2"/>
    <property type="protein sequence ID" value="ENSP00000327528.4"/>
    <property type="gene ID" value="ENSG00000182240.16"/>
</dbReference>
<dbReference type="GeneID" id="25825"/>
<dbReference type="KEGG" id="hsa:25825"/>
<dbReference type="MANE-Select" id="ENST00000330333.11">
    <property type="protein sequence ID" value="ENSP00000332979.6"/>
    <property type="RefSeq nucleotide sequence ID" value="NM_012105.5"/>
    <property type="RefSeq protein sequence ID" value="NP_036237.2"/>
</dbReference>
<dbReference type="UCSC" id="uc002yyw.5">
    <molecule id="Q9Y5Z0-1"/>
    <property type="organism name" value="human"/>
</dbReference>
<dbReference type="AGR" id="HGNC:934"/>
<dbReference type="CTD" id="25825"/>
<dbReference type="DisGeNET" id="25825"/>
<dbReference type="GeneCards" id="BACE2"/>
<dbReference type="HGNC" id="HGNC:934">
    <property type="gene designation" value="BACE2"/>
</dbReference>
<dbReference type="HPA" id="ENSG00000182240">
    <property type="expression patterns" value="Tissue enhanced (salivary)"/>
</dbReference>
<dbReference type="MIM" id="605668">
    <property type="type" value="gene"/>
</dbReference>
<dbReference type="neXtProt" id="NX_Q9Y5Z0"/>
<dbReference type="OpenTargets" id="ENSG00000182240"/>
<dbReference type="PharmGKB" id="PA25233"/>
<dbReference type="VEuPathDB" id="HostDB:ENSG00000182240"/>
<dbReference type="eggNOG" id="KOG1339">
    <property type="taxonomic scope" value="Eukaryota"/>
</dbReference>
<dbReference type="GeneTree" id="ENSGT00940000159548"/>
<dbReference type="HOGENOM" id="CLU_039009_0_0_1"/>
<dbReference type="InParanoid" id="Q9Y5Z0"/>
<dbReference type="OMA" id="CDTVNDE"/>
<dbReference type="OrthoDB" id="2747330at2759"/>
<dbReference type="PAN-GO" id="Q9Y5Z0">
    <property type="GO annotations" value="6 GO annotations based on evolutionary models"/>
</dbReference>
<dbReference type="PhylomeDB" id="Q9Y5Z0"/>
<dbReference type="TreeFam" id="TF329595"/>
<dbReference type="BioCyc" id="MetaCyc:G66-33964-MONOMER"/>
<dbReference type="BRENDA" id="3.4.23.45">
    <property type="organism ID" value="2681"/>
</dbReference>
<dbReference type="BRENDA" id="3.4.24.56">
    <property type="organism ID" value="2681"/>
</dbReference>
<dbReference type="PathwayCommons" id="Q9Y5Z0"/>
<dbReference type="SignaLink" id="Q9Y5Z0"/>
<dbReference type="SIGNOR" id="Q9Y5Z0"/>
<dbReference type="BioGRID-ORCS" id="25825">
    <property type="hits" value="11 hits in 1151 CRISPR screens"/>
</dbReference>
<dbReference type="ChiTaRS" id="BACE2">
    <property type="organism name" value="human"/>
</dbReference>
<dbReference type="EvolutionaryTrace" id="Q9Y5Z0"/>
<dbReference type="GeneWiki" id="Beta-secretase_2"/>
<dbReference type="GenomeRNAi" id="25825"/>
<dbReference type="Pharos" id="Q9Y5Z0">
    <property type="development level" value="Tchem"/>
</dbReference>
<dbReference type="PRO" id="PR:Q9Y5Z0"/>
<dbReference type="Proteomes" id="UP000005640">
    <property type="component" value="Chromosome 21"/>
</dbReference>
<dbReference type="RNAct" id="Q9Y5Z0">
    <property type="molecule type" value="protein"/>
</dbReference>
<dbReference type="Bgee" id="ENSG00000182240">
    <property type="expression patterns" value="Expressed in parotid gland and 182 other cell types or tissues"/>
</dbReference>
<dbReference type="GO" id="GO:0005783">
    <property type="term" value="C:endoplasmic reticulum"/>
    <property type="evidence" value="ECO:0007669"/>
    <property type="project" value="UniProtKB-SubCell"/>
</dbReference>
<dbReference type="GO" id="GO:0005768">
    <property type="term" value="C:endosome"/>
    <property type="evidence" value="ECO:0000318"/>
    <property type="project" value="GO_Central"/>
</dbReference>
<dbReference type="GO" id="GO:0005794">
    <property type="term" value="C:Golgi apparatus"/>
    <property type="evidence" value="ECO:0000314"/>
    <property type="project" value="UniProtKB"/>
</dbReference>
<dbReference type="GO" id="GO:0033162">
    <property type="term" value="C:melanosome membrane"/>
    <property type="evidence" value="ECO:0000314"/>
    <property type="project" value="UniProtKB"/>
</dbReference>
<dbReference type="GO" id="GO:0016020">
    <property type="term" value="C:membrane"/>
    <property type="evidence" value="ECO:0000303"/>
    <property type="project" value="UniProtKB"/>
</dbReference>
<dbReference type="GO" id="GO:0005886">
    <property type="term" value="C:plasma membrane"/>
    <property type="evidence" value="ECO:0000314"/>
    <property type="project" value="UniProtKB"/>
</dbReference>
<dbReference type="GO" id="GO:0005802">
    <property type="term" value="C:trans-Golgi network"/>
    <property type="evidence" value="ECO:0000318"/>
    <property type="project" value="GO_Central"/>
</dbReference>
<dbReference type="GO" id="GO:0004190">
    <property type="term" value="F:aspartic-type endopeptidase activity"/>
    <property type="evidence" value="ECO:0000314"/>
    <property type="project" value="UniProtKB"/>
</dbReference>
<dbReference type="GO" id="GO:0050435">
    <property type="term" value="P:amyloid-beta metabolic process"/>
    <property type="evidence" value="ECO:0000318"/>
    <property type="project" value="GO_Central"/>
</dbReference>
<dbReference type="GO" id="GO:0042593">
    <property type="term" value="P:glucose homeostasis"/>
    <property type="evidence" value="ECO:0000315"/>
    <property type="project" value="UniProtKB"/>
</dbReference>
<dbReference type="GO" id="GO:0032438">
    <property type="term" value="P:melanosome organization"/>
    <property type="evidence" value="ECO:0000315"/>
    <property type="project" value="UniProtKB"/>
</dbReference>
<dbReference type="GO" id="GO:0006509">
    <property type="term" value="P:membrane protein ectodomain proteolysis"/>
    <property type="evidence" value="ECO:0000314"/>
    <property type="project" value="UniProtKB"/>
</dbReference>
<dbReference type="GO" id="GO:0042985">
    <property type="term" value="P:negative regulation of amyloid precursor protein biosynthetic process"/>
    <property type="evidence" value="ECO:0000315"/>
    <property type="project" value="UniProtKB"/>
</dbReference>
<dbReference type="GO" id="GO:0016486">
    <property type="term" value="P:peptide hormone processing"/>
    <property type="evidence" value="ECO:0000303"/>
    <property type="project" value="UniProtKB"/>
</dbReference>
<dbReference type="GO" id="GO:0016485">
    <property type="term" value="P:protein processing"/>
    <property type="evidence" value="ECO:0000314"/>
    <property type="project" value="UniProtKB"/>
</dbReference>
<dbReference type="GO" id="GO:0006508">
    <property type="term" value="P:proteolysis"/>
    <property type="evidence" value="ECO:0000303"/>
    <property type="project" value="UniProtKB"/>
</dbReference>
<dbReference type="CDD" id="cd05473">
    <property type="entry name" value="beta_secretase_like"/>
    <property type="match status" value="1"/>
</dbReference>
<dbReference type="FunFam" id="2.40.70.10:FF:000003">
    <property type="entry name" value="Beta-secretase 1"/>
    <property type="match status" value="1"/>
</dbReference>
<dbReference type="FunFam" id="2.40.70.10:FF:000007">
    <property type="entry name" value="Beta-secretase 1"/>
    <property type="match status" value="1"/>
</dbReference>
<dbReference type="Gene3D" id="2.40.70.10">
    <property type="entry name" value="Acid Proteases"/>
    <property type="match status" value="2"/>
</dbReference>
<dbReference type="InterPro" id="IPR001461">
    <property type="entry name" value="Aspartic_peptidase_A1"/>
</dbReference>
<dbReference type="InterPro" id="IPR001969">
    <property type="entry name" value="Aspartic_peptidase_AS"/>
</dbReference>
<dbReference type="InterPro" id="IPR009119">
    <property type="entry name" value="BACE"/>
</dbReference>
<dbReference type="InterPro" id="IPR009121">
    <property type="entry name" value="BACE2"/>
</dbReference>
<dbReference type="InterPro" id="IPR033874">
    <property type="entry name" value="Memapsin-like"/>
</dbReference>
<dbReference type="InterPro" id="IPR033121">
    <property type="entry name" value="PEPTIDASE_A1"/>
</dbReference>
<dbReference type="InterPro" id="IPR021109">
    <property type="entry name" value="Peptidase_aspartic_dom_sf"/>
</dbReference>
<dbReference type="PANTHER" id="PTHR47965">
    <property type="entry name" value="ASPARTYL PROTEASE-RELATED"/>
    <property type="match status" value="1"/>
</dbReference>
<dbReference type="PANTHER" id="PTHR47965:SF40">
    <property type="entry name" value="BETA-SECRETASE 2"/>
    <property type="match status" value="1"/>
</dbReference>
<dbReference type="Pfam" id="PF00026">
    <property type="entry name" value="Asp"/>
    <property type="match status" value="1"/>
</dbReference>
<dbReference type="PRINTS" id="PR01817">
    <property type="entry name" value="BACE2"/>
</dbReference>
<dbReference type="PRINTS" id="PR01815">
    <property type="entry name" value="BACEFAMILY"/>
</dbReference>
<dbReference type="PRINTS" id="PR00792">
    <property type="entry name" value="PEPSIN"/>
</dbReference>
<dbReference type="SUPFAM" id="SSF50630">
    <property type="entry name" value="Acid proteases"/>
    <property type="match status" value="1"/>
</dbReference>
<dbReference type="PROSITE" id="PS00141">
    <property type="entry name" value="ASP_PROTEASE"/>
    <property type="match status" value="2"/>
</dbReference>
<dbReference type="PROSITE" id="PS51767">
    <property type="entry name" value="PEPTIDASE_A1"/>
    <property type="match status" value="1"/>
</dbReference>
<name>BACE2_HUMAN</name>
<sequence>MGALARALLLPLLAQWLLRAAPELAPAPFTLPLRVAAATNRVVAPTPGPGTPAERHADGLALALEPALASPAGAANFLAMVDNLQGDSGRGYYLEMLIGTPPQKLQILVDTGSSNFAVAGTPHSYIDTYFDTERSSTYRSKGFDVTVKYTQGSWTGFVGEDLVTIPKGFNTSFLVNIATIFESENFFLPGIKWNGILGLAYATLAKPSSSLETFFDSLVTQANIPNVFSMQMCGAGLPVAGSGTNGGSLVLGGIEPSLYKGDIWYTPIKEEWYYQIEILKLEIGGQSLNLDCREYNADKAIVDSGTTLLRLPQKVFDAVVEAVARASLIPEFSDGFWTGSQLACWTNSETPWSYFPKISIYLRDENSSRSFRITILPQLYIQPMMGAGLNYECYRFGISPSTNALVIGATVMEGFYVIFDRAQKRVGFAASPCAEIAGAAVSEISGPFSTEDVASNCVPAQSLSEPILWIVSYALMSVCGAILLVLIVLLLLPFRCQRRPRDPEVVNDESSLVRHRWK</sequence>
<keyword id="KW-0002">3D-structure</keyword>
<keyword id="KW-0025">Alternative splicing</keyword>
<keyword id="KW-0064">Aspartyl protease</keyword>
<keyword id="KW-0068">Autocatalytic cleavage</keyword>
<keyword id="KW-1003">Cell membrane</keyword>
<keyword id="KW-0903">Direct protein sequencing</keyword>
<keyword id="KW-1015">Disulfide bond</keyword>
<keyword id="KW-0256">Endoplasmic reticulum</keyword>
<keyword id="KW-0967">Endosome</keyword>
<keyword id="KW-0325">Glycoprotein</keyword>
<keyword id="KW-0333">Golgi apparatus</keyword>
<keyword id="KW-0378">Hydrolase</keyword>
<keyword id="KW-0472">Membrane</keyword>
<keyword id="KW-0645">Protease</keyword>
<keyword id="KW-1267">Proteomics identification</keyword>
<keyword id="KW-1185">Reference proteome</keyword>
<keyword id="KW-0732">Signal</keyword>
<keyword id="KW-0812">Transmembrane</keyword>
<keyword id="KW-1133">Transmembrane helix</keyword>
<keyword id="KW-0865">Zymogen</keyword>
<accession>Q9Y5Z0</accession>
<accession>A8K7P1</accession>
<accession>Q5DIH8</accession>
<accession>Q8N2D4</accession>
<accession>Q9H2V8</accession>
<accession>Q9NZL1</accession>
<accession>Q9NZL2</accession>
<accession>Q9UJT6</accession>
<feature type="signal peptide" evidence="1">
    <location>
        <begin position="1"/>
        <end position="20"/>
    </location>
</feature>
<feature type="propeptide" id="PRO_0000025945" evidence="3 9 11 13 14">
    <location>
        <begin position="21"/>
        <end position="62"/>
    </location>
</feature>
<feature type="chain" id="PRO_0000025946" description="Beta-secretase 2">
    <location>
        <begin position="63"/>
        <end position="518"/>
    </location>
</feature>
<feature type="topological domain" description="Extracellular" evidence="1">
    <location>
        <begin position="21"/>
        <end position="473"/>
    </location>
</feature>
<feature type="transmembrane region" description="Helical" evidence="1">
    <location>
        <begin position="474"/>
        <end position="494"/>
    </location>
</feature>
<feature type="topological domain" description="Cytoplasmic" evidence="1">
    <location>
        <begin position="495"/>
        <end position="518"/>
    </location>
</feature>
<feature type="domain" description="Peptidase A1" evidence="2">
    <location>
        <begin position="92"/>
        <end position="429"/>
    </location>
</feature>
<feature type="active site">
    <location>
        <position position="110"/>
    </location>
</feature>
<feature type="active site">
    <location>
        <position position="303"/>
    </location>
</feature>
<feature type="glycosylation site" description="N-linked (GlcNAc...) asparagine" evidence="1">
    <location>
        <position position="170"/>
    </location>
</feature>
<feature type="glycosylation site" description="N-linked (GlcNAc...) asparagine" evidence="1">
    <location>
        <position position="366"/>
    </location>
</feature>
<feature type="disulfide bond" evidence="13">
    <location>
        <begin position="233"/>
        <end position="433"/>
    </location>
</feature>
<feature type="disulfide bond" evidence="13">
    <location>
        <begin position="292"/>
        <end position="457"/>
    </location>
</feature>
<feature type="disulfide bond" evidence="13">
    <location>
        <begin position="344"/>
        <end position="393"/>
    </location>
</feature>
<feature type="splice variant" id="VSP_038023" description="In isoform 5." evidence="19">
    <location>
        <begin position="1"/>
        <end position="95"/>
    </location>
</feature>
<feature type="splice variant" id="VSP_038024" description="In isoform 4." evidence="20">
    <location>
        <begin position="1"/>
        <end position="79"/>
    </location>
</feature>
<feature type="splice variant" id="VSP_038025" description="In isoform 2." evidence="18">
    <location>
        <begin position="329"/>
        <end position="378"/>
    </location>
</feature>
<feature type="splice variant" id="VSP_038026" description="In isoform 3." evidence="18">
    <original>LYIQPMMGAGLNYECYRF</original>
    <variation>KLQVLQCLKFPGLSQQRM</variation>
    <location>
        <begin position="379"/>
        <end position="396"/>
    </location>
</feature>
<feature type="splice variant" id="VSP_038027" description="In isoform 3." evidence="18">
    <location>
        <begin position="397"/>
        <end position="518"/>
    </location>
</feature>
<feature type="mutagenesis site" description="Loss of autoproteolytic cleavage." evidence="7 10">
    <original>D</original>
    <variation>A</variation>
    <variation>N</variation>
    <location>
        <position position="110"/>
    </location>
</feature>
<feature type="mutagenesis site" description="Loss of autoproteolytic cleavage." evidence="7">
    <original>D</original>
    <variation>A</variation>
    <location>
        <position position="303"/>
    </location>
</feature>
<feature type="sequence conflict" description="In Ref. 7; AAF13714." evidence="21" ref="7">
    <original>A</original>
    <variation>T</variation>
    <location>
        <position position="36"/>
    </location>
</feature>
<feature type="sequence conflict" description="In Ref. 10; BAC11682." evidence="21" ref="10">
    <original>E</original>
    <variation>G</variation>
    <location>
        <position position="184"/>
    </location>
</feature>
<feature type="sequence conflict" description="In Ref. 10; BAC11682." evidence="21" ref="10">
    <original>K</original>
    <variation>Q</variation>
    <location>
        <position position="192"/>
    </location>
</feature>
<feature type="sequence conflict" description="In Ref. 10; BAC11682." evidence="21" ref="10">
    <original>C</original>
    <variation>R</variation>
    <location>
        <position position="233"/>
    </location>
</feature>
<feature type="helix" evidence="27">
    <location>
        <begin position="78"/>
        <end position="80"/>
    </location>
</feature>
<feature type="strand" evidence="27">
    <location>
        <begin position="84"/>
        <end position="87"/>
    </location>
</feature>
<feature type="turn" evidence="27">
    <location>
        <begin position="88"/>
        <end position="90"/>
    </location>
</feature>
<feature type="strand" evidence="27">
    <location>
        <begin position="91"/>
        <end position="98"/>
    </location>
</feature>
<feature type="turn" evidence="27">
    <location>
        <begin position="99"/>
        <end position="102"/>
    </location>
</feature>
<feature type="strand" evidence="27">
    <location>
        <begin position="103"/>
        <end position="110"/>
    </location>
</feature>
<feature type="strand" evidence="27">
    <location>
        <begin position="116"/>
        <end position="119"/>
    </location>
</feature>
<feature type="helix" evidence="27">
    <location>
        <begin position="132"/>
        <end position="134"/>
    </location>
</feature>
<feature type="strand" evidence="27">
    <location>
        <begin position="139"/>
        <end position="149"/>
    </location>
</feature>
<feature type="strand" evidence="27">
    <location>
        <begin position="152"/>
        <end position="164"/>
    </location>
</feature>
<feature type="turn" evidence="27">
    <location>
        <begin position="166"/>
        <end position="168"/>
    </location>
</feature>
<feature type="strand" evidence="27">
    <location>
        <begin position="173"/>
        <end position="185"/>
    </location>
</feature>
<feature type="strand" evidence="27">
    <location>
        <begin position="194"/>
        <end position="198"/>
    </location>
</feature>
<feature type="helix" evidence="27">
    <location>
        <begin position="202"/>
        <end position="204"/>
    </location>
</feature>
<feature type="strand" evidence="26">
    <location>
        <begin position="206"/>
        <end position="208"/>
    </location>
</feature>
<feature type="helix" evidence="27">
    <location>
        <begin position="214"/>
        <end position="222"/>
    </location>
</feature>
<feature type="strand" evidence="27">
    <location>
        <begin position="228"/>
        <end position="232"/>
    </location>
</feature>
<feature type="strand" evidence="27">
    <location>
        <begin position="247"/>
        <end position="253"/>
    </location>
</feature>
<feature type="helix" evidence="27">
    <location>
        <begin position="256"/>
        <end position="258"/>
    </location>
</feature>
<feature type="strand" evidence="27">
    <location>
        <begin position="264"/>
        <end position="270"/>
    </location>
</feature>
<feature type="turn" evidence="27">
    <location>
        <begin position="271"/>
        <end position="274"/>
    </location>
</feature>
<feature type="strand" evidence="27">
    <location>
        <begin position="278"/>
        <end position="283"/>
    </location>
</feature>
<feature type="helix" evidence="27">
    <location>
        <begin position="292"/>
        <end position="295"/>
    </location>
</feature>
<feature type="strand" evidence="24">
    <location>
        <begin position="296"/>
        <end position="298"/>
    </location>
</feature>
<feature type="strand" evidence="27">
    <location>
        <begin position="300"/>
        <end position="302"/>
    </location>
</feature>
<feature type="strand" evidence="27">
    <location>
        <begin position="308"/>
        <end position="312"/>
    </location>
</feature>
<feature type="helix" evidence="27">
    <location>
        <begin position="313"/>
        <end position="326"/>
    </location>
</feature>
<feature type="strand" evidence="27">
    <location>
        <begin position="328"/>
        <end position="330"/>
    </location>
</feature>
<feature type="helix" evidence="27">
    <location>
        <begin position="334"/>
        <end position="337"/>
    </location>
</feature>
<feature type="helix" evidence="22">
    <location>
        <begin position="339"/>
        <end position="342"/>
    </location>
</feature>
<feature type="strand" evidence="29">
    <location>
        <begin position="343"/>
        <end position="345"/>
    </location>
</feature>
<feature type="helix" evidence="23">
    <location>
        <begin position="347"/>
        <end position="349"/>
    </location>
</feature>
<feature type="helix" evidence="27">
    <location>
        <begin position="352"/>
        <end position="354"/>
    </location>
</feature>
<feature type="strand" evidence="27">
    <location>
        <begin position="358"/>
        <end position="363"/>
    </location>
</feature>
<feature type="strand" evidence="27">
    <location>
        <begin position="369"/>
        <end position="375"/>
    </location>
</feature>
<feature type="helix" evidence="27">
    <location>
        <begin position="377"/>
        <end position="379"/>
    </location>
</feature>
<feature type="strand" evidence="27">
    <location>
        <begin position="381"/>
        <end position="383"/>
    </location>
</feature>
<feature type="strand" evidence="27">
    <location>
        <begin position="393"/>
        <end position="403"/>
    </location>
</feature>
<feature type="strand" evidence="27">
    <location>
        <begin position="405"/>
        <end position="407"/>
    </location>
</feature>
<feature type="helix" evidence="27">
    <location>
        <begin position="409"/>
        <end position="412"/>
    </location>
</feature>
<feature type="strand" evidence="27">
    <location>
        <begin position="415"/>
        <end position="420"/>
    </location>
</feature>
<feature type="turn" evidence="27">
    <location>
        <begin position="421"/>
        <end position="424"/>
    </location>
</feature>
<feature type="strand" evidence="27">
    <location>
        <begin position="425"/>
        <end position="430"/>
    </location>
</feature>
<feature type="helix" evidence="25">
    <location>
        <begin position="432"/>
        <end position="434"/>
    </location>
</feature>
<feature type="helix" evidence="26">
    <location>
        <begin position="436"/>
        <end position="438"/>
    </location>
</feature>
<feature type="strand" evidence="27">
    <location>
        <begin position="439"/>
        <end position="449"/>
    </location>
</feature>
<feature type="strand" evidence="28">
    <location>
        <begin position="451"/>
        <end position="453"/>
    </location>
</feature>
<feature type="sequence conflict" description="In Ref. 3; AAF35836." evidence="21" ref="3">
    <original>Q</original>
    <variation>R</variation>
    <location sequence="Q9Y5Z0-3">
        <position position="381"/>
    </location>
</feature>
<feature type="sequence conflict" description="In Ref. 3; AAF35836." evidence="21" ref="3">
    <original>M</original>
    <variation>F</variation>
    <location sequence="Q9Y5Z0-3">
        <position position="396"/>
    </location>
</feature>